<proteinExistence type="inferred from homology"/>
<name>PEPX_STRPI</name>
<dbReference type="EC" id="3.4.14.11" evidence="1"/>
<dbReference type="EMBL" id="CP000936">
    <property type="protein sequence ID" value="ACA37589.1"/>
    <property type="molecule type" value="Genomic_DNA"/>
</dbReference>
<dbReference type="RefSeq" id="WP_001212051.1">
    <property type="nucleotide sequence ID" value="NC_010380.1"/>
</dbReference>
<dbReference type="SMR" id="B1IB64"/>
<dbReference type="ESTHER" id="strpi-pepx">
    <property type="family name" value="Lactobacillus_peptidase"/>
</dbReference>
<dbReference type="MEROPS" id="S15.001"/>
<dbReference type="KEGG" id="spv:SPH_1001"/>
<dbReference type="HOGENOM" id="CLU_011800_0_0_9"/>
<dbReference type="Proteomes" id="UP000002163">
    <property type="component" value="Chromosome"/>
</dbReference>
<dbReference type="GO" id="GO:0005737">
    <property type="term" value="C:cytoplasm"/>
    <property type="evidence" value="ECO:0007669"/>
    <property type="project" value="UniProtKB-SubCell"/>
</dbReference>
<dbReference type="GO" id="GO:0004177">
    <property type="term" value="F:aminopeptidase activity"/>
    <property type="evidence" value="ECO:0007669"/>
    <property type="project" value="UniProtKB-KW"/>
</dbReference>
<dbReference type="GO" id="GO:0008239">
    <property type="term" value="F:dipeptidyl-peptidase activity"/>
    <property type="evidence" value="ECO:0007669"/>
    <property type="project" value="UniProtKB-UniRule"/>
</dbReference>
<dbReference type="GO" id="GO:0008236">
    <property type="term" value="F:serine-type peptidase activity"/>
    <property type="evidence" value="ECO:0007669"/>
    <property type="project" value="UniProtKB-KW"/>
</dbReference>
<dbReference type="GO" id="GO:0006508">
    <property type="term" value="P:proteolysis"/>
    <property type="evidence" value="ECO:0007669"/>
    <property type="project" value="UniProtKB-KW"/>
</dbReference>
<dbReference type="Gene3D" id="1.10.246.70">
    <property type="match status" value="1"/>
</dbReference>
<dbReference type="Gene3D" id="3.40.50.1820">
    <property type="entry name" value="alpha/beta hydrolase"/>
    <property type="match status" value="1"/>
</dbReference>
<dbReference type="Gene3D" id="2.60.120.260">
    <property type="entry name" value="Galactose-binding domain-like"/>
    <property type="match status" value="1"/>
</dbReference>
<dbReference type="HAMAP" id="MF_00698">
    <property type="entry name" value="Aminopeptidase_S15"/>
    <property type="match status" value="1"/>
</dbReference>
<dbReference type="InterPro" id="IPR029058">
    <property type="entry name" value="AB_hydrolase_fold"/>
</dbReference>
<dbReference type="InterPro" id="IPR008979">
    <property type="entry name" value="Galactose-bd-like_sf"/>
</dbReference>
<dbReference type="InterPro" id="IPR008252">
    <property type="entry name" value="Pept_S15_Xpro"/>
</dbReference>
<dbReference type="InterPro" id="IPR015251">
    <property type="entry name" value="PepX_N_dom"/>
</dbReference>
<dbReference type="InterPro" id="IPR036313">
    <property type="entry name" value="PepX_N_dom_sf"/>
</dbReference>
<dbReference type="InterPro" id="IPR000383">
    <property type="entry name" value="Xaa-Pro-like_dom"/>
</dbReference>
<dbReference type="InterPro" id="IPR013736">
    <property type="entry name" value="Xaa-Pro_dipept_C"/>
</dbReference>
<dbReference type="InterPro" id="IPR050585">
    <property type="entry name" value="Xaa-Pro_dipeptidyl-ppase/CocE"/>
</dbReference>
<dbReference type="NCBIfam" id="NF003783">
    <property type="entry name" value="PRK05371.1-4"/>
    <property type="match status" value="1"/>
</dbReference>
<dbReference type="PANTHER" id="PTHR43056:SF10">
    <property type="entry name" value="COCE_NOND FAMILY, PUTATIVE (AFU_ORTHOLOGUE AFUA_7G00600)-RELATED"/>
    <property type="match status" value="1"/>
</dbReference>
<dbReference type="PANTHER" id="PTHR43056">
    <property type="entry name" value="PEPTIDASE S9 PROLYL OLIGOPEPTIDASE"/>
    <property type="match status" value="1"/>
</dbReference>
<dbReference type="Pfam" id="PF02129">
    <property type="entry name" value="Peptidase_S15"/>
    <property type="match status" value="1"/>
</dbReference>
<dbReference type="Pfam" id="PF08530">
    <property type="entry name" value="PepX_C"/>
    <property type="match status" value="1"/>
</dbReference>
<dbReference type="Pfam" id="PF09168">
    <property type="entry name" value="PepX_N"/>
    <property type="match status" value="1"/>
</dbReference>
<dbReference type="PRINTS" id="PR00923">
    <property type="entry name" value="LACTOPTASE"/>
</dbReference>
<dbReference type="SMART" id="SM00939">
    <property type="entry name" value="PepX_C"/>
    <property type="match status" value="1"/>
</dbReference>
<dbReference type="SMART" id="SM00940">
    <property type="entry name" value="PepX_N"/>
    <property type="match status" value="1"/>
</dbReference>
<dbReference type="SUPFAM" id="SSF53474">
    <property type="entry name" value="alpha/beta-Hydrolases"/>
    <property type="match status" value="1"/>
</dbReference>
<dbReference type="SUPFAM" id="SSF49785">
    <property type="entry name" value="Galactose-binding domain-like"/>
    <property type="match status" value="1"/>
</dbReference>
<dbReference type="SUPFAM" id="SSF81761">
    <property type="entry name" value="X-Prolyl dipeptidyl aminopeptidase PepX, N-terminal domain"/>
    <property type="match status" value="1"/>
</dbReference>
<sequence length="757" mass="86826">MRFNQYSYINFPKENVLSELKKCGFDLQNTANHKDSLETFLRRFFFTYQDTNYPLSILAADKKTDLLTFFQSEDELTADIFYTVAFQLLGFSYLVDFEDSDVFRKETGFPIIYGDLIENLYQLLNTRTKKGNTLIDQLVSDGLIPEDNDYHYFNGKSLATFSNQDVIREVVYVESRVDTDQKGLSDLVKVSIIRPRFDGKIPAIMTASPYHQGTNDKASDKALYKMEGELKVKLPHKIELEKPQLNLVQPQGQAELIAEAEEKLTHINSSYTLNDYFLPRGFANLYVSGVGTKDSTGFMTNGDYQQIEAYKNVIDWLNGRCRAFTDHTRQRQVKADWSNGKVATTGLSYLGTMSNGLATTGVDGLEVIIAEAGISSWYNYYRENGLVTSPGGYPGEDFDSLAELTYSRNLLAGDYIRGNEAHQADLEKVKAQLDRKTGDYNQFWHDRNYLLNAHKVKAEVVFTHGSQDWNVKPLHVYQMFHALPTHIHKHLFFHNGAHVYMNNWQSIDFRESINALLTKKLLGQETDFQLPTVIWQDNTAPQTWLSLDNFGGQENCKTFSLGQEEQAIQNQYPDKDFERYGKTYQAFNTELYQGKANQITINLPVTKDLHLNGRAQLNLRIKSSTNKGLLSAQLLEFGQKKYLQPYPAILSARTIDNGRYHMLENLCELPFRPEAQRVVTKGYLNLQNRSDLLLVEDITADEWMDVQFELQPTIYKLKEGDTLRLVLYTTDFEITIRDNTDYHLTVDLAQSMLTLPC</sequence>
<comment type="function">
    <text evidence="1">Removes N-terminal dipeptides sequentially from polypeptides having unsubstituted N-termini provided that the penultimate residue is proline.</text>
</comment>
<comment type="catalytic activity">
    <reaction evidence="1">
        <text>Hydrolyzes Xaa-Pro-|- bonds to release unblocked, N-terminal dipeptides from substrates including Ala-Pro-|-p-nitroanilide and (sequentially) Tyr-Pro-|-Phe-Pro-|-Gly-Pro-|-Ile.</text>
        <dbReference type="EC" id="3.4.14.11"/>
    </reaction>
</comment>
<comment type="subunit">
    <text evidence="1">Homodimer.</text>
</comment>
<comment type="subcellular location">
    <subcellularLocation>
        <location evidence="1">Cytoplasm</location>
    </subcellularLocation>
</comment>
<comment type="similarity">
    <text evidence="1">Belongs to the peptidase S15 family.</text>
</comment>
<accession>B1IB64</accession>
<feature type="chain" id="PRO_1000132343" description="Xaa-Pro dipeptidyl-peptidase">
    <location>
        <begin position="1"/>
        <end position="757"/>
    </location>
</feature>
<feature type="active site" description="Charge relay system" evidence="1">
    <location>
        <position position="348"/>
    </location>
</feature>
<feature type="active site" description="Charge relay system" evidence="1">
    <location>
        <position position="468"/>
    </location>
</feature>
<feature type="active site" description="Charge relay system" evidence="1">
    <location>
        <position position="498"/>
    </location>
</feature>
<protein>
    <recommendedName>
        <fullName evidence="1">Xaa-Pro dipeptidyl-peptidase</fullName>
        <ecNumber evidence="1">3.4.14.11</ecNumber>
    </recommendedName>
    <alternativeName>
        <fullName evidence="1">X-Pro dipeptidyl-peptidase</fullName>
    </alternativeName>
    <alternativeName>
        <fullName evidence="1">X-prolyl-dipeptidyl aminopeptidase</fullName>
        <shortName evidence="1">X-PDAP</shortName>
    </alternativeName>
</protein>
<evidence type="ECO:0000255" key="1">
    <source>
        <dbReference type="HAMAP-Rule" id="MF_00698"/>
    </source>
</evidence>
<gene>
    <name evidence="1" type="primary">pepX</name>
    <name type="ordered locus">SPH_1001</name>
</gene>
<organism>
    <name type="scientific">Streptococcus pneumoniae (strain Hungary19A-6)</name>
    <dbReference type="NCBI Taxonomy" id="487214"/>
    <lineage>
        <taxon>Bacteria</taxon>
        <taxon>Bacillati</taxon>
        <taxon>Bacillota</taxon>
        <taxon>Bacilli</taxon>
        <taxon>Lactobacillales</taxon>
        <taxon>Streptococcaceae</taxon>
        <taxon>Streptococcus</taxon>
    </lineage>
</organism>
<keyword id="KW-0031">Aminopeptidase</keyword>
<keyword id="KW-0963">Cytoplasm</keyword>
<keyword id="KW-0378">Hydrolase</keyword>
<keyword id="KW-0645">Protease</keyword>
<keyword id="KW-0720">Serine protease</keyword>
<reference key="1">
    <citation type="journal article" date="2010" name="Genome Biol.">
        <title>Structure and dynamics of the pan-genome of Streptococcus pneumoniae and closely related species.</title>
        <authorList>
            <person name="Donati C."/>
            <person name="Hiller N.L."/>
            <person name="Tettelin H."/>
            <person name="Muzzi A."/>
            <person name="Croucher N.J."/>
            <person name="Angiuoli S.V."/>
            <person name="Oggioni M."/>
            <person name="Dunning Hotopp J.C."/>
            <person name="Hu F.Z."/>
            <person name="Riley D.R."/>
            <person name="Covacci A."/>
            <person name="Mitchell T.J."/>
            <person name="Bentley S.D."/>
            <person name="Kilian M."/>
            <person name="Ehrlich G.D."/>
            <person name="Rappuoli R."/>
            <person name="Moxon E.R."/>
            <person name="Masignani V."/>
        </authorList>
    </citation>
    <scope>NUCLEOTIDE SEQUENCE [LARGE SCALE GENOMIC DNA]</scope>
    <source>
        <strain>Hungary19A-6</strain>
    </source>
</reference>